<dbReference type="EC" id="2.4.1.115"/>
<dbReference type="EMBL" id="X77462">
    <property type="protein sequence ID" value="CAA54612.1"/>
    <property type="molecule type" value="mRNA"/>
</dbReference>
<dbReference type="PIR" id="S41951">
    <property type="entry name" value="S41951"/>
</dbReference>
<dbReference type="SMR" id="Q40287"/>
<dbReference type="CAZy" id="GT1">
    <property type="family name" value="Glycosyltransferase Family 1"/>
</dbReference>
<dbReference type="UniPathway" id="UPA00009"/>
<dbReference type="GO" id="GO:0047213">
    <property type="term" value="F:anthocyanidin 3-O-glucosyltransferase activity"/>
    <property type="evidence" value="ECO:0007669"/>
    <property type="project" value="UniProtKB-EC"/>
</dbReference>
<dbReference type="GO" id="GO:0009718">
    <property type="term" value="P:anthocyanin-containing compound biosynthetic process"/>
    <property type="evidence" value="ECO:0007669"/>
    <property type="project" value="UniProtKB-UniPathway"/>
</dbReference>
<dbReference type="CDD" id="cd03784">
    <property type="entry name" value="GT1_Gtf-like"/>
    <property type="match status" value="1"/>
</dbReference>
<dbReference type="FunFam" id="3.40.50.2000:FF:000051">
    <property type="entry name" value="Glycosyltransferase"/>
    <property type="match status" value="1"/>
</dbReference>
<dbReference type="FunFam" id="3.40.50.2000:FF:000054">
    <property type="entry name" value="Glycosyltransferase"/>
    <property type="match status" value="1"/>
</dbReference>
<dbReference type="Gene3D" id="3.40.50.2000">
    <property type="entry name" value="Glycogen Phosphorylase B"/>
    <property type="match status" value="2"/>
</dbReference>
<dbReference type="InterPro" id="IPR002213">
    <property type="entry name" value="UDP_glucos_trans"/>
</dbReference>
<dbReference type="InterPro" id="IPR035595">
    <property type="entry name" value="UDP_glycos_trans_CS"/>
</dbReference>
<dbReference type="PANTHER" id="PTHR48046:SF1">
    <property type="entry name" value="GLYCOSYLTRANSFERASE-RELATED"/>
    <property type="match status" value="1"/>
</dbReference>
<dbReference type="PANTHER" id="PTHR48046">
    <property type="entry name" value="UDP-GLYCOSYLTRANSFERASE 72E1"/>
    <property type="match status" value="1"/>
</dbReference>
<dbReference type="Pfam" id="PF00201">
    <property type="entry name" value="UDPGT"/>
    <property type="match status" value="1"/>
</dbReference>
<dbReference type="SUPFAM" id="SSF53756">
    <property type="entry name" value="UDP-Glycosyltransferase/glycogen phosphorylase"/>
    <property type="match status" value="1"/>
</dbReference>
<dbReference type="PROSITE" id="PS00375">
    <property type="entry name" value="UDPGT"/>
    <property type="match status" value="1"/>
</dbReference>
<reference key="1">
    <citation type="journal article" date="1994" name="DNA Seq.">
        <title>Multiple secondary plant product UDP-glucose glucosyltransferase genes expressed in cassava (Manihot esculenta Crantz) cotyledons.</title>
        <authorList>
            <person name="Hughes J."/>
            <person name="Hughes M.A."/>
        </authorList>
    </citation>
    <scope>NUCLEOTIDE SEQUENCE [MRNA]</scope>
    <source>
        <tissue>Cotyledon</tissue>
    </source>
</reference>
<protein>
    <recommendedName>
        <fullName>Anthocyanidin 3-O-glucosyltransferase 5</fullName>
        <ecNumber>2.4.1.115</ecNumber>
    </recommendedName>
    <alternativeName>
        <fullName>Flavonol 3-O-glucosyltransferase 5</fullName>
    </alternativeName>
    <alternativeName>
        <fullName>UDP-glucose flavonoid 3-O-glucosyltransferase 5</fullName>
    </alternativeName>
</protein>
<proteinExistence type="evidence at transcript level"/>
<name>UFOG5_MANES</name>
<gene>
    <name type="primary">GT5</name>
    <name type="synonym">UGT73A5</name>
</gene>
<organism>
    <name type="scientific">Manihot esculenta</name>
    <name type="common">Cassava</name>
    <name type="synonym">Jatropha manihot</name>
    <dbReference type="NCBI Taxonomy" id="3983"/>
    <lineage>
        <taxon>Eukaryota</taxon>
        <taxon>Viridiplantae</taxon>
        <taxon>Streptophyta</taxon>
        <taxon>Embryophyta</taxon>
        <taxon>Tracheophyta</taxon>
        <taxon>Spermatophyta</taxon>
        <taxon>Magnoliopsida</taxon>
        <taxon>eudicotyledons</taxon>
        <taxon>Gunneridae</taxon>
        <taxon>Pentapetalae</taxon>
        <taxon>rosids</taxon>
        <taxon>fabids</taxon>
        <taxon>Malpighiales</taxon>
        <taxon>Euphorbiaceae</taxon>
        <taxon>Crotonoideae</taxon>
        <taxon>Manihoteae</taxon>
        <taxon>Manihot</taxon>
    </lineage>
</organism>
<keyword id="KW-0328">Glycosyltransferase</keyword>
<keyword id="KW-0808">Transferase</keyword>
<comment type="function">
    <text evidence="1">In the presence of other necessary color factors, this glycosylation reaction allows the accumulation of anthocyanin pigments.</text>
</comment>
<comment type="catalytic activity">
    <reaction>
        <text>an anthocyanidin + UDP-alpha-D-glucose + H(+) = an anthocyanidin 3-O-beta-D-glucoside + UDP</text>
        <dbReference type="Rhea" id="RHEA:20093"/>
        <dbReference type="ChEBI" id="CHEBI:15378"/>
        <dbReference type="ChEBI" id="CHEBI:16307"/>
        <dbReference type="ChEBI" id="CHEBI:58223"/>
        <dbReference type="ChEBI" id="CHEBI:58885"/>
        <dbReference type="ChEBI" id="CHEBI:143576"/>
        <dbReference type="EC" id="2.4.1.115"/>
    </reaction>
</comment>
<comment type="pathway">
    <text>Pigment biosynthesis; anthocyanin biosynthesis.</text>
</comment>
<comment type="tissue specificity">
    <text>Faintly expressed in cotyledons.</text>
</comment>
<comment type="developmental stage">
    <text>Rare transcripts expressed in cotyledon and roots during the development.</text>
</comment>
<comment type="similarity">
    <text evidence="4">Belongs to the UDP-glycosyltransferase family.</text>
</comment>
<evidence type="ECO:0000250" key="1"/>
<evidence type="ECO:0000250" key="2">
    <source>
        <dbReference type="UniProtKB" id="A0A0A1HA03"/>
    </source>
</evidence>
<evidence type="ECO:0000250" key="3">
    <source>
        <dbReference type="UniProtKB" id="P51094"/>
    </source>
</evidence>
<evidence type="ECO:0000305" key="4"/>
<feature type="chain" id="PRO_0000074146" description="Anthocyanidin 3-O-glucosyltransferase 5">
    <location>
        <begin position="1"/>
        <end position="487"/>
    </location>
</feature>
<feature type="active site" description="Proton acceptor" evidence="2">
    <location>
        <position position="22"/>
    </location>
</feature>
<feature type="active site" description="Charge relay" evidence="2">
    <location>
        <position position="119"/>
    </location>
</feature>
<feature type="binding site" evidence="3">
    <location>
        <position position="22"/>
    </location>
    <ligand>
        <name>an anthocyanidin</name>
        <dbReference type="ChEBI" id="CHEBI:143576"/>
    </ligand>
</feature>
<feature type="binding site" evidence="2">
    <location>
        <position position="354"/>
    </location>
    <ligand>
        <name>UDP-alpha-D-glucose</name>
        <dbReference type="ChEBI" id="CHEBI:58885"/>
    </ligand>
</feature>
<feature type="binding site" evidence="2">
    <location>
        <position position="369"/>
    </location>
    <ligand>
        <name>UDP-alpha-D-glucose</name>
        <dbReference type="ChEBI" id="CHEBI:58885"/>
    </ligand>
</feature>
<feature type="binding site" evidence="2">
    <location>
        <position position="372"/>
    </location>
    <ligand>
        <name>UDP-alpha-D-glucose</name>
        <dbReference type="ChEBI" id="CHEBI:58885"/>
    </ligand>
</feature>
<feature type="binding site" evidence="2">
    <location>
        <position position="373"/>
    </location>
    <ligand>
        <name>UDP-alpha-D-glucose</name>
        <dbReference type="ChEBI" id="CHEBI:58885"/>
    </ligand>
</feature>
<feature type="binding site" evidence="2">
    <location>
        <position position="374"/>
    </location>
    <ligand>
        <name>UDP-alpha-D-glucose</name>
        <dbReference type="ChEBI" id="CHEBI:58885"/>
    </ligand>
</feature>
<feature type="binding site" evidence="2">
    <location>
        <position position="377"/>
    </location>
    <ligand>
        <name>UDP-alpha-D-glucose</name>
        <dbReference type="ChEBI" id="CHEBI:58885"/>
    </ligand>
</feature>
<feature type="binding site" evidence="3">
    <location>
        <position position="392"/>
    </location>
    <ligand>
        <name>an anthocyanidin</name>
        <dbReference type="ChEBI" id="CHEBI:143576"/>
    </ligand>
</feature>
<feature type="binding site" evidence="2">
    <location>
        <position position="393"/>
    </location>
    <ligand>
        <name>UDP-alpha-D-glucose</name>
        <dbReference type="ChEBI" id="CHEBI:58885"/>
    </ligand>
</feature>
<feature type="binding site" evidence="2">
    <location>
        <position position="394"/>
    </location>
    <ligand>
        <name>UDP-alpha-D-glucose</name>
        <dbReference type="ChEBI" id="CHEBI:58885"/>
    </ligand>
</feature>
<sequence length="487" mass="54382">MGSTDLNSKPHIVLLSSPGLGHLIPVLELGKRIVTLCNFDVTIFMVGSDTSAAEPQVLRSAMTPKLCEIIQLPPPNISCLIDPEATVCTRLFVLMREIRPAFRAAVSALKFRPAAIIVDLFGTESLEVAKELGIAKYVYIASNAWFLALTIYVPILDKEVEGEFVLQKEPMKIPGCRPVRTEEVVDPMLDRTNQQYSEYFRLGIEIPTADGILMNTWEALEPTTFGALRDVKFLGRVAKVPVFPIGPLRRQAGPCGSNCELLDWLDQQPKESVVYVSFGSGGTLSLEQMIELAWGLERSQQRFIWVVRQPTVKTGDAAFFTQGDGADDMSGYFPEGFLTRIQNVGLVVPQWSPQIHIMSHPSVGVFLSHCGWNSVLESITAGVPIIAWPIYAEQRMNATLLTEELGVAVRPKNLPAKEVVKREEIERMIRRIMVDEEGSEIRKRVRELKDSGEKALNEGGSSFNYMSALGNEWEKSWKTQRSERSLW</sequence>
<accession>Q40287</accession>